<feature type="chain" id="PRO_1000001295" description="LexA repressor">
    <location>
        <begin position="1"/>
        <end position="228"/>
    </location>
</feature>
<feature type="DNA-binding region" description="H-T-H motif" evidence="1">
    <location>
        <begin position="26"/>
        <end position="46"/>
    </location>
</feature>
<feature type="active site" description="For autocatalytic cleavage activity" evidence="1">
    <location>
        <position position="149"/>
    </location>
</feature>
<feature type="active site" description="For autocatalytic cleavage activity" evidence="1">
    <location>
        <position position="187"/>
    </location>
</feature>
<feature type="site" description="Cleavage; by autolysis" evidence="1">
    <location>
        <begin position="113"/>
        <end position="114"/>
    </location>
</feature>
<proteinExistence type="inferred from homology"/>
<gene>
    <name evidence="1" type="primary">lexA</name>
    <name type="ordered locus">Jann_1874</name>
</gene>
<sequence length="228" mass="24819">MLTRKQRDLLEFIHKRMQRDGVPPSFDEMKEALDLRSKSGIHRLITALEERGFIRRLAHRARAIEIVKMPDAMTGGGFEPRVIDGDRGPAPANAMAVRAAPAREVPVMGQIAAGVPIEAISQVASHVAVPEQMLGAGGNHYALEVKGDSMIDAGINDGDIVVIEEGNTADNGDIVVALVEDHEATLKRLRRKGGMIALEAANPAYETRVFRDDQVKVQGKLVGLIRTY</sequence>
<protein>
    <recommendedName>
        <fullName evidence="1">LexA repressor</fullName>
        <ecNumber evidence="1">3.4.21.88</ecNumber>
    </recommendedName>
</protein>
<comment type="function">
    <text evidence="1">Represses a number of genes involved in the response to DNA damage (SOS response), including recA and lexA. In the presence of single-stranded DNA, RecA interacts with LexA causing an autocatalytic cleavage which disrupts the DNA-binding part of LexA, leading to derepression of the SOS regulon and eventually DNA repair.</text>
</comment>
<comment type="catalytic activity">
    <reaction evidence="1">
        <text>Hydrolysis of Ala-|-Gly bond in repressor LexA.</text>
        <dbReference type="EC" id="3.4.21.88"/>
    </reaction>
</comment>
<comment type="subunit">
    <text evidence="1">Homodimer.</text>
</comment>
<comment type="similarity">
    <text evidence="1">Belongs to the peptidase S24 family.</text>
</comment>
<name>LEXA_JANSC</name>
<dbReference type="EC" id="3.4.21.88" evidence="1"/>
<dbReference type="EMBL" id="CP000264">
    <property type="protein sequence ID" value="ABD54791.1"/>
    <property type="molecule type" value="Genomic_DNA"/>
</dbReference>
<dbReference type="RefSeq" id="WP_011454996.1">
    <property type="nucleotide sequence ID" value="NC_007802.1"/>
</dbReference>
<dbReference type="SMR" id="Q28R71"/>
<dbReference type="STRING" id="290400.Jann_1874"/>
<dbReference type="MEROPS" id="S24.001"/>
<dbReference type="KEGG" id="jan:Jann_1874"/>
<dbReference type="eggNOG" id="COG1974">
    <property type="taxonomic scope" value="Bacteria"/>
</dbReference>
<dbReference type="HOGENOM" id="CLU_066192_45_2_5"/>
<dbReference type="OrthoDB" id="9802364at2"/>
<dbReference type="Proteomes" id="UP000008326">
    <property type="component" value="Chromosome"/>
</dbReference>
<dbReference type="GO" id="GO:0003677">
    <property type="term" value="F:DNA binding"/>
    <property type="evidence" value="ECO:0007669"/>
    <property type="project" value="UniProtKB-UniRule"/>
</dbReference>
<dbReference type="GO" id="GO:0004252">
    <property type="term" value="F:serine-type endopeptidase activity"/>
    <property type="evidence" value="ECO:0007669"/>
    <property type="project" value="UniProtKB-UniRule"/>
</dbReference>
<dbReference type="GO" id="GO:0006281">
    <property type="term" value="P:DNA repair"/>
    <property type="evidence" value="ECO:0007669"/>
    <property type="project" value="UniProtKB-UniRule"/>
</dbReference>
<dbReference type="GO" id="GO:0006260">
    <property type="term" value="P:DNA replication"/>
    <property type="evidence" value="ECO:0007669"/>
    <property type="project" value="UniProtKB-UniRule"/>
</dbReference>
<dbReference type="GO" id="GO:0045892">
    <property type="term" value="P:negative regulation of DNA-templated transcription"/>
    <property type="evidence" value="ECO:0007669"/>
    <property type="project" value="UniProtKB-UniRule"/>
</dbReference>
<dbReference type="GO" id="GO:0006508">
    <property type="term" value="P:proteolysis"/>
    <property type="evidence" value="ECO:0007669"/>
    <property type="project" value="InterPro"/>
</dbReference>
<dbReference type="GO" id="GO:0009432">
    <property type="term" value="P:SOS response"/>
    <property type="evidence" value="ECO:0007669"/>
    <property type="project" value="UniProtKB-UniRule"/>
</dbReference>
<dbReference type="CDD" id="cd06529">
    <property type="entry name" value="S24_LexA-like"/>
    <property type="match status" value="1"/>
</dbReference>
<dbReference type="FunFam" id="1.10.10.10:FF:000102">
    <property type="entry name" value="LexA repressor"/>
    <property type="match status" value="1"/>
</dbReference>
<dbReference type="FunFam" id="2.10.109.10:FF:000001">
    <property type="entry name" value="LexA repressor"/>
    <property type="match status" value="1"/>
</dbReference>
<dbReference type="Gene3D" id="2.10.109.10">
    <property type="entry name" value="Umud Fragment, subunit A"/>
    <property type="match status" value="1"/>
</dbReference>
<dbReference type="Gene3D" id="1.10.10.10">
    <property type="entry name" value="Winged helix-like DNA-binding domain superfamily/Winged helix DNA-binding domain"/>
    <property type="match status" value="1"/>
</dbReference>
<dbReference type="HAMAP" id="MF_00015">
    <property type="entry name" value="LexA"/>
    <property type="match status" value="1"/>
</dbReference>
<dbReference type="InterPro" id="IPR006200">
    <property type="entry name" value="LexA"/>
</dbReference>
<dbReference type="InterPro" id="IPR039418">
    <property type="entry name" value="LexA-like"/>
</dbReference>
<dbReference type="InterPro" id="IPR036286">
    <property type="entry name" value="LexA/Signal_pep-like_sf"/>
</dbReference>
<dbReference type="InterPro" id="IPR006199">
    <property type="entry name" value="LexA_DNA-bd_dom"/>
</dbReference>
<dbReference type="InterPro" id="IPR050077">
    <property type="entry name" value="LexA_repressor"/>
</dbReference>
<dbReference type="InterPro" id="IPR006197">
    <property type="entry name" value="Peptidase_S24_LexA"/>
</dbReference>
<dbReference type="InterPro" id="IPR015927">
    <property type="entry name" value="Peptidase_S24_S26A/B/C"/>
</dbReference>
<dbReference type="InterPro" id="IPR036388">
    <property type="entry name" value="WH-like_DNA-bd_sf"/>
</dbReference>
<dbReference type="InterPro" id="IPR036390">
    <property type="entry name" value="WH_DNA-bd_sf"/>
</dbReference>
<dbReference type="NCBIfam" id="TIGR00498">
    <property type="entry name" value="lexA"/>
    <property type="match status" value="1"/>
</dbReference>
<dbReference type="PANTHER" id="PTHR33516">
    <property type="entry name" value="LEXA REPRESSOR"/>
    <property type="match status" value="1"/>
</dbReference>
<dbReference type="PANTHER" id="PTHR33516:SF2">
    <property type="entry name" value="LEXA REPRESSOR-RELATED"/>
    <property type="match status" value="1"/>
</dbReference>
<dbReference type="Pfam" id="PF01726">
    <property type="entry name" value="LexA_DNA_bind"/>
    <property type="match status" value="1"/>
</dbReference>
<dbReference type="Pfam" id="PF00717">
    <property type="entry name" value="Peptidase_S24"/>
    <property type="match status" value="1"/>
</dbReference>
<dbReference type="PRINTS" id="PR00726">
    <property type="entry name" value="LEXASERPTASE"/>
</dbReference>
<dbReference type="SUPFAM" id="SSF51306">
    <property type="entry name" value="LexA/Signal peptidase"/>
    <property type="match status" value="1"/>
</dbReference>
<dbReference type="SUPFAM" id="SSF46785">
    <property type="entry name" value="Winged helix' DNA-binding domain"/>
    <property type="match status" value="1"/>
</dbReference>
<organism>
    <name type="scientific">Jannaschia sp. (strain CCS1)</name>
    <dbReference type="NCBI Taxonomy" id="290400"/>
    <lineage>
        <taxon>Bacteria</taxon>
        <taxon>Pseudomonadati</taxon>
        <taxon>Pseudomonadota</taxon>
        <taxon>Alphaproteobacteria</taxon>
        <taxon>Rhodobacterales</taxon>
        <taxon>Roseobacteraceae</taxon>
        <taxon>Jannaschia</taxon>
    </lineage>
</organism>
<reference key="1">
    <citation type="submission" date="2006-02" db="EMBL/GenBank/DDBJ databases">
        <title>Complete sequence of chromosome of Jannaschia sp. CCS1.</title>
        <authorList>
            <consortium name="US DOE Joint Genome Institute"/>
            <person name="Copeland A."/>
            <person name="Lucas S."/>
            <person name="Lapidus A."/>
            <person name="Barry K."/>
            <person name="Detter J.C."/>
            <person name="Glavina del Rio T."/>
            <person name="Hammon N."/>
            <person name="Israni S."/>
            <person name="Pitluck S."/>
            <person name="Brettin T."/>
            <person name="Bruce D."/>
            <person name="Han C."/>
            <person name="Tapia R."/>
            <person name="Gilna P."/>
            <person name="Chertkov O."/>
            <person name="Saunders E."/>
            <person name="Schmutz J."/>
            <person name="Larimer F."/>
            <person name="Land M."/>
            <person name="Kyrpides N."/>
            <person name="Lykidis A."/>
            <person name="Moran M.A."/>
            <person name="Belas R."/>
            <person name="Ye W."/>
            <person name="Buchan A."/>
            <person name="Gonzalez J.M."/>
            <person name="Schell M.A."/>
            <person name="Richardson P."/>
        </authorList>
    </citation>
    <scope>NUCLEOTIDE SEQUENCE [LARGE SCALE GENOMIC DNA]</scope>
    <source>
        <strain>CCS1</strain>
    </source>
</reference>
<accession>Q28R71</accession>
<keyword id="KW-0068">Autocatalytic cleavage</keyword>
<keyword id="KW-0227">DNA damage</keyword>
<keyword id="KW-0234">DNA repair</keyword>
<keyword id="KW-0235">DNA replication</keyword>
<keyword id="KW-0238">DNA-binding</keyword>
<keyword id="KW-0378">Hydrolase</keyword>
<keyword id="KW-1185">Reference proteome</keyword>
<keyword id="KW-0678">Repressor</keyword>
<keyword id="KW-0742">SOS response</keyword>
<keyword id="KW-0804">Transcription</keyword>
<keyword id="KW-0805">Transcription regulation</keyword>
<evidence type="ECO:0000255" key="1">
    <source>
        <dbReference type="HAMAP-Rule" id="MF_00015"/>
    </source>
</evidence>